<comment type="function">
    <text evidence="1">Catalyzes the methylthiolation of an aspartic acid residue of ribosomal protein uS12.</text>
</comment>
<comment type="catalytic activity">
    <reaction evidence="1">
        <text>L-aspartate(89)-[ribosomal protein uS12]-hydrogen + (sulfur carrier)-SH + AH2 + 2 S-adenosyl-L-methionine = 3-methylsulfanyl-L-aspartate(89)-[ribosomal protein uS12]-hydrogen + (sulfur carrier)-H + 5'-deoxyadenosine + L-methionine + A + S-adenosyl-L-homocysteine + 2 H(+)</text>
        <dbReference type="Rhea" id="RHEA:37087"/>
        <dbReference type="Rhea" id="RHEA-COMP:10460"/>
        <dbReference type="Rhea" id="RHEA-COMP:10461"/>
        <dbReference type="Rhea" id="RHEA-COMP:14737"/>
        <dbReference type="Rhea" id="RHEA-COMP:14739"/>
        <dbReference type="ChEBI" id="CHEBI:13193"/>
        <dbReference type="ChEBI" id="CHEBI:15378"/>
        <dbReference type="ChEBI" id="CHEBI:17319"/>
        <dbReference type="ChEBI" id="CHEBI:17499"/>
        <dbReference type="ChEBI" id="CHEBI:29917"/>
        <dbReference type="ChEBI" id="CHEBI:29961"/>
        <dbReference type="ChEBI" id="CHEBI:57844"/>
        <dbReference type="ChEBI" id="CHEBI:57856"/>
        <dbReference type="ChEBI" id="CHEBI:59789"/>
        <dbReference type="ChEBI" id="CHEBI:64428"/>
        <dbReference type="ChEBI" id="CHEBI:73599"/>
        <dbReference type="EC" id="2.8.4.4"/>
    </reaction>
</comment>
<comment type="cofactor">
    <cofactor evidence="1">
        <name>[4Fe-4S] cluster</name>
        <dbReference type="ChEBI" id="CHEBI:49883"/>
    </cofactor>
    <text evidence="1">Binds 2 [4Fe-4S] clusters. One cluster is coordinated with 3 cysteines and an exchangeable S-adenosyl-L-methionine.</text>
</comment>
<comment type="subcellular location">
    <subcellularLocation>
        <location evidence="1">Cytoplasm</location>
    </subcellularLocation>
</comment>
<comment type="similarity">
    <text evidence="1">Belongs to the methylthiotransferase family. RimO subfamily.</text>
</comment>
<reference key="1">
    <citation type="submission" date="2007-04" db="EMBL/GenBank/DDBJ databases">
        <title>Complete sequence of Roseiflexus sp. RS-1.</title>
        <authorList>
            <consortium name="US DOE Joint Genome Institute"/>
            <person name="Copeland A."/>
            <person name="Lucas S."/>
            <person name="Lapidus A."/>
            <person name="Barry K."/>
            <person name="Detter J.C."/>
            <person name="Glavina del Rio T."/>
            <person name="Hammon N."/>
            <person name="Israni S."/>
            <person name="Dalin E."/>
            <person name="Tice H."/>
            <person name="Pitluck S."/>
            <person name="Chertkov O."/>
            <person name="Brettin T."/>
            <person name="Bruce D."/>
            <person name="Han C."/>
            <person name="Schmutz J."/>
            <person name="Larimer F."/>
            <person name="Land M."/>
            <person name="Hauser L."/>
            <person name="Kyrpides N."/>
            <person name="Mikhailova N."/>
            <person name="Bryant D.A."/>
            <person name="Richardson P."/>
        </authorList>
    </citation>
    <scope>NUCLEOTIDE SEQUENCE [LARGE SCALE GENOMIC DNA]</scope>
    <source>
        <strain>RS-1</strain>
    </source>
</reference>
<gene>
    <name evidence="1" type="primary">rimO</name>
    <name type="ordered locus">RoseRS_0531</name>
</gene>
<accession>A5UQQ2</accession>
<sequence length="472" mass="51876">MKFHIITLGCPKNQVDSEGMSSILAAQGHTPVAHADDADVVVVNTCSFIAAAREETLDVLREVAARKTPGQYLVAAGCMAESHSALVAAAPGVDALLSTREWMRIGDVVDTLQREPAVAASSAAREIIPLSSAPASSDDLRVPGAYADWRTAPIRRRITGPSAYLKISDGCNLRCAFCTIPSFKGDMRSKAVGAILGEAQELADAGVKEIVLVAQHLTDYGRDLGLKDGLALLLDELCAVLPKDRWVRLMYAYPHGISERLIATMARHPQICHYLDMPLQHAHPETLRRMHRPPDSDRTRRLIADLRAAMPDIALRSTFIIGFPGETSAEFRALTAFLEEVQFDRVGVFRYSREPGTPAAALPDQIPQRVIERRWHTIMRLQQGISRQRNRRWVGRVIRVLVEGQGQTDDGRLLSVGRSFRDAPEVDGQVLFWGTAATGTFVDVRVTQALDYDLWGEMVEAPADDARSENGT</sequence>
<keyword id="KW-0004">4Fe-4S</keyword>
<keyword id="KW-0963">Cytoplasm</keyword>
<keyword id="KW-0408">Iron</keyword>
<keyword id="KW-0411">Iron-sulfur</keyword>
<keyword id="KW-0479">Metal-binding</keyword>
<keyword id="KW-0949">S-adenosyl-L-methionine</keyword>
<keyword id="KW-0808">Transferase</keyword>
<organism>
    <name type="scientific">Roseiflexus sp. (strain RS-1)</name>
    <dbReference type="NCBI Taxonomy" id="357808"/>
    <lineage>
        <taxon>Bacteria</taxon>
        <taxon>Bacillati</taxon>
        <taxon>Chloroflexota</taxon>
        <taxon>Chloroflexia</taxon>
        <taxon>Chloroflexales</taxon>
        <taxon>Roseiflexineae</taxon>
        <taxon>Roseiflexaceae</taxon>
        <taxon>Roseiflexus</taxon>
    </lineage>
</organism>
<dbReference type="EC" id="2.8.4.4" evidence="1"/>
<dbReference type="EMBL" id="CP000686">
    <property type="protein sequence ID" value="ABQ88955.1"/>
    <property type="molecule type" value="Genomic_DNA"/>
</dbReference>
<dbReference type="RefSeq" id="WP_011955312.1">
    <property type="nucleotide sequence ID" value="NC_009523.1"/>
</dbReference>
<dbReference type="SMR" id="A5UQQ2"/>
<dbReference type="STRING" id="357808.RoseRS_0531"/>
<dbReference type="KEGG" id="rrs:RoseRS_0531"/>
<dbReference type="eggNOG" id="COG0621">
    <property type="taxonomic scope" value="Bacteria"/>
</dbReference>
<dbReference type="HOGENOM" id="CLU_018697_0_1_0"/>
<dbReference type="OrthoDB" id="9805215at2"/>
<dbReference type="Proteomes" id="UP000006554">
    <property type="component" value="Chromosome"/>
</dbReference>
<dbReference type="GO" id="GO:0005829">
    <property type="term" value="C:cytosol"/>
    <property type="evidence" value="ECO:0007669"/>
    <property type="project" value="TreeGrafter"/>
</dbReference>
<dbReference type="GO" id="GO:0051539">
    <property type="term" value="F:4 iron, 4 sulfur cluster binding"/>
    <property type="evidence" value="ECO:0007669"/>
    <property type="project" value="UniProtKB-UniRule"/>
</dbReference>
<dbReference type="GO" id="GO:0035599">
    <property type="term" value="F:aspartic acid methylthiotransferase activity"/>
    <property type="evidence" value="ECO:0007669"/>
    <property type="project" value="TreeGrafter"/>
</dbReference>
<dbReference type="GO" id="GO:0046872">
    <property type="term" value="F:metal ion binding"/>
    <property type="evidence" value="ECO:0007669"/>
    <property type="project" value="UniProtKB-KW"/>
</dbReference>
<dbReference type="GO" id="GO:0103039">
    <property type="term" value="F:protein methylthiotransferase activity"/>
    <property type="evidence" value="ECO:0007669"/>
    <property type="project" value="UniProtKB-EC"/>
</dbReference>
<dbReference type="GO" id="GO:0006400">
    <property type="term" value="P:tRNA modification"/>
    <property type="evidence" value="ECO:0007669"/>
    <property type="project" value="InterPro"/>
</dbReference>
<dbReference type="CDD" id="cd01335">
    <property type="entry name" value="Radical_SAM"/>
    <property type="match status" value="1"/>
</dbReference>
<dbReference type="FunFam" id="3.80.30.20:FF:000001">
    <property type="entry name" value="tRNA-2-methylthio-N(6)-dimethylallyladenosine synthase 2"/>
    <property type="match status" value="1"/>
</dbReference>
<dbReference type="Gene3D" id="3.40.50.12160">
    <property type="entry name" value="Methylthiotransferase, N-terminal domain"/>
    <property type="match status" value="1"/>
</dbReference>
<dbReference type="Gene3D" id="2.40.50.140">
    <property type="entry name" value="Nucleic acid-binding proteins"/>
    <property type="match status" value="1"/>
</dbReference>
<dbReference type="Gene3D" id="3.80.30.20">
    <property type="entry name" value="tm_1862 like domain"/>
    <property type="match status" value="1"/>
</dbReference>
<dbReference type="HAMAP" id="MF_01865">
    <property type="entry name" value="MTTase_RimO"/>
    <property type="match status" value="1"/>
</dbReference>
<dbReference type="InterPro" id="IPR006638">
    <property type="entry name" value="Elp3/MiaA/NifB-like_rSAM"/>
</dbReference>
<dbReference type="InterPro" id="IPR005839">
    <property type="entry name" value="Methylthiotransferase"/>
</dbReference>
<dbReference type="InterPro" id="IPR020612">
    <property type="entry name" value="Methylthiotransferase_CS"/>
</dbReference>
<dbReference type="InterPro" id="IPR013848">
    <property type="entry name" value="Methylthiotransferase_N"/>
</dbReference>
<dbReference type="InterPro" id="IPR038135">
    <property type="entry name" value="Methylthiotransferase_N_sf"/>
</dbReference>
<dbReference type="InterPro" id="IPR000385">
    <property type="entry name" value="MoaA_NifB_PqqE_Fe-S-bd_CS"/>
</dbReference>
<dbReference type="InterPro" id="IPR012340">
    <property type="entry name" value="NA-bd_OB-fold"/>
</dbReference>
<dbReference type="InterPro" id="IPR005840">
    <property type="entry name" value="Ribosomal_uS12_MeSTrfase_RimO"/>
</dbReference>
<dbReference type="InterPro" id="IPR007197">
    <property type="entry name" value="rSAM"/>
</dbReference>
<dbReference type="InterPro" id="IPR023404">
    <property type="entry name" value="rSAM_horseshoe"/>
</dbReference>
<dbReference type="InterPro" id="IPR002792">
    <property type="entry name" value="TRAM_dom"/>
</dbReference>
<dbReference type="NCBIfam" id="TIGR01125">
    <property type="entry name" value="30S ribosomal protein S12 methylthiotransferase RimO"/>
    <property type="match status" value="1"/>
</dbReference>
<dbReference type="NCBIfam" id="TIGR00089">
    <property type="entry name" value="MiaB/RimO family radical SAM methylthiotransferase"/>
    <property type="match status" value="1"/>
</dbReference>
<dbReference type="PANTHER" id="PTHR43837">
    <property type="entry name" value="RIBOSOMAL PROTEIN S12 METHYLTHIOTRANSFERASE RIMO"/>
    <property type="match status" value="1"/>
</dbReference>
<dbReference type="PANTHER" id="PTHR43837:SF1">
    <property type="entry name" value="RIBOSOMAL PROTEIN US12 METHYLTHIOTRANSFERASE RIMO"/>
    <property type="match status" value="1"/>
</dbReference>
<dbReference type="Pfam" id="PF04055">
    <property type="entry name" value="Radical_SAM"/>
    <property type="match status" value="1"/>
</dbReference>
<dbReference type="Pfam" id="PF18693">
    <property type="entry name" value="TRAM_2"/>
    <property type="match status" value="1"/>
</dbReference>
<dbReference type="Pfam" id="PF00919">
    <property type="entry name" value="UPF0004"/>
    <property type="match status" value="1"/>
</dbReference>
<dbReference type="SFLD" id="SFLDG01082">
    <property type="entry name" value="B12-binding_domain_containing"/>
    <property type="match status" value="1"/>
</dbReference>
<dbReference type="SFLD" id="SFLDG01061">
    <property type="entry name" value="methylthiotransferase"/>
    <property type="match status" value="1"/>
</dbReference>
<dbReference type="SFLD" id="SFLDF00274">
    <property type="entry name" value="ribosomal_protein_S12_methylth"/>
    <property type="match status" value="1"/>
</dbReference>
<dbReference type="SMART" id="SM00729">
    <property type="entry name" value="Elp3"/>
    <property type="match status" value="1"/>
</dbReference>
<dbReference type="SUPFAM" id="SSF102114">
    <property type="entry name" value="Radical SAM enzymes"/>
    <property type="match status" value="1"/>
</dbReference>
<dbReference type="PROSITE" id="PS51449">
    <property type="entry name" value="MTTASE_N"/>
    <property type="match status" value="1"/>
</dbReference>
<dbReference type="PROSITE" id="PS01278">
    <property type="entry name" value="MTTASE_RADICAL"/>
    <property type="match status" value="1"/>
</dbReference>
<dbReference type="PROSITE" id="PS51918">
    <property type="entry name" value="RADICAL_SAM"/>
    <property type="match status" value="1"/>
</dbReference>
<dbReference type="PROSITE" id="PS50926">
    <property type="entry name" value="TRAM"/>
    <property type="match status" value="1"/>
</dbReference>
<evidence type="ECO:0000255" key="1">
    <source>
        <dbReference type="HAMAP-Rule" id="MF_01865"/>
    </source>
</evidence>
<evidence type="ECO:0000255" key="2">
    <source>
        <dbReference type="PROSITE-ProRule" id="PRU01266"/>
    </source>
</evidence>
<proteinExistence type="inferred from homology"/>
<name>RIMO_ROSS1</name>
<protein>
    <recommendedName>
        <fullName evidence="1">Ribosomal protein uS12 methylthiotransferase RimO</fullName>
        <shortName evidence="1">uS12 MTTase</shortName>
        <shortName evidence="1">uS12 methylthiotransferase</shortName>
        <ecNumber evidence="1">2.8.4.4</ecNumber>
    </recommendedName>
    <alternativeName>
        <fullName evidence="1">Ribosomal protein uS12 (aspartate-C(3))-methylthiotransferase</fullName>
    </alternativeName>
    <alternativeName>
        <fullName evidence="1">Ribosome maturation factor RimO</fullName>
    </alternativeName>
</protein>
<feature type="chain" id="PRO_0000374979" description="Ribosomal protein uS12 methylthiotransferase RimO">
    <location>
        <begin position="1"/>
        <end position="472"/>
    </location>
</feature>
<feature type="domain" description="MTTase N-terminal" evidence="1">
    <location>
        <begin position="1"/>
        <end position="114"/>
    </location>
</feature>
<feature type="domain" description="Radical SAM core" evidence="2">
    <location>
        <begin position="157"/>
        <end position="388"/>
    </location>
</feature>
<feature type="domain" description="TRAM" evidence="1">
    <location>
        <begin position="391"/>
        <end position="460"/>
    </location>
</feature>
<feature type="binding site" evidence="1">
    <location>
        <position position="10"/>
    </location>
    <ligand>
        <name>[4Fe-4S] cluster</name>
        <dbReference type="ChEBI" id="CHEBI:49883"/>
        <label>1</label>
    </ligand>
</feature>
<feature type="binding site" evidence="1">
    <location>
        <position position="46"/>
    </location>
    <ligand>
        <name>[4Fe-4S] cluster</name>
        <dbReference type="ChEBI" id="CHEBI:49883"/>
        <label>1</label>
    </ligand>
</feature>
<feature type="binding site" evidence="1">
    <location>
        <position position="78"/>
    </location>
    <ligand>
        <name>[4Fe-4S] cluster</name>
        <dbReference type="ChEBI" id="CHEBI:49883"/>
        <label>1</label>
    </ligand>
</feature>
<feature type="binding site" evidence="1">
    <location>
        <position position="171"/>
    </location>
    <ligand>
        <name>[4Fe-4S] cluster</name>
        <dbReference type="ChEBI" id="CHEBI:49883"/>
        <label>2</label>
        <note>4Fe-4S-S-AdoMet</note>
    </ligand>
</feature>
<feature type="binding site" evidence="1">
    <location>
        <position position="175"/>
    </location>
    <ligand>
        <name>[4Fe-4S] cluster</name>
        <dbReference type="ChEBI" id="CHEBI:49883"/>
        <label>2</label>
        <note>4Fe-4S-S-AdoMet</note>
    </ligand>
</feature>
<feature type="binding site" evidence="1">
    <location>
        <position position="178"/>
    </location>
    <ligand>
        <name>[4Fe-4S] cluster</name>
        <dbReference type="ChEBI" id="CHEBI:49883"/>
        <label>2</label>
        <note>4Fe-4S-S-AdoMet</note>
    </ligand>
</feature>